<keyword id="KW-0878">Amphibian defense peptide</keyword>
<keyword id="KW-0044">Antibiotic</keyword>
<keyword id="KW-0929">Antimicrobial</keyword>
<keyword id="KW-0165">Cleavage on pair of basic residues</keyword>
<keyword id="KW-1015">Disulfide bond</keyword>
<keyword id="KW-0964">Secreted</keyword>
<keyword id="KW-0732">Signal</keyword>
<evidence type="ECO:0000250" key="1"/>
<evidence type="ECO:0000255" key="2"/>
<evidence type="ECO:0000269" key="3">
    <source>
    </source>
</evidence>
<evidence type="ECO:0000305" key="4"/>
<proteinExistence type="evidence at protein level"/>
<name>PA1C_ODOVE</name>
<sequence length="68" mass="7524">MFTMKKSLLLLFFLGTISLSLCEEERGADEEEGDGEKLTKRALSILRGLEKLAKMGIALTNCKATKKC</sequence>
<protein>
    <recommendedName>
        <fullName>Palustrin-1c</fullName>
        <shortName>pal1c</shortName>
    </recommendedName>
</protein>
<comment type="function">
    <text evidence="1">Antimicrobial peptide.</text>
</comment>
<comment type="subcellular location">
    <subcellularLocation>
        <location>Secreted</location>
    </subcellularLocation>
</comment>
<comment type="tissue specificity">
    <text>Expressed by the skin glands.</text>
</comment>
<comment type="mass spectrometry" mass="2873.32" method="MALDI" evidence="3"/>
<comment type="similarity">
    <text evidence="4">Belongs to the frog skin active peptide (FSAP) family. Brevinin subfamily.</text>
</comment>
<dbReference type="EMBL" id="AM113507">
    <property type="protein sequence ID" value="CAJ34603.1"/>
    <property type="molecule type" value="mRNA"/>
</dbReference>
<dbReference type="GO" id="GO:0005576">
    <property type="term" value="C:extracellular region"/>
    <property type="evidence" value="ECO:0007669"/>
    <property type="project" value="UniProtKB-SubCell"/>
</dbReference>
<dbReference type="GO" id="GO:0050829">
    <property type="term" value="P:defense response to Gram-negative bacterium"/>
    <property type="evidence" value="ECO:0007669"/>
    <property type="project" value="UniProtKB-ARBA"/>
</dbReference>
<dbReference type="GO" id="GO:0050830">
    <property type="term" value="P:defense response to Gram-positive bacterium"/>
    <property type="evidence" value="ECO:0007669"/>
    <property type="project" value="UniProtKB-ARBA"/>
</dbReference>
<dbReference type="InterPro" id="IPR012521">
    <property type="entry name" value="Antimicrobial_frog_2"/>
</dbReference>
<dbReference type="InterPro" id="IPR004275">
    <property type="entry name" value="Frog_antimicrobial_propeptide"/>
</dbReference>
<dbReference type="Pfam" id="PF08023">
    <property type="entry name" value="Antimicrobial_2"/>
    <property type="match status" value="1"/>
</dbReference>
<dbReference type="Pfam" id="PF03032">
    <property type="entry name" value="FSAP_sig_propep"/>
    <property type="match status" value="1"/>
</dbReference>
<reference key="1">
    <citation type="journal article" date="2006" name="Peptides">
        <title>The Chinese bamboo leaf odorous frog (Rana (odorrana) versabilis) and north american rana frogs share the same families of skin antimicrobial peptides.</title>
        <authorList>
            <person name="Chen T."/>
            <person name="Zhou M."/>
            <person name="Rao P."/>
            <person name="Walker B."/>
            <person name="Shaw C."/>
        </authorList>
    </citation>
    <scope>NUCLEOTIDE SEQUENCE [MRNA]</scope>
    <scope>MASS SPECTROMETRY</scope>
    <source>
        <tissue>Skin secretion</tissue>
    </source>
</reference>
<organism>
    <name type="scientific">Odorrana versabilis</name>
    <name type="common">Chinese bamboo leaf odorous frog</name>
    <name type="synonym">Rana versabilis</name>
    <dbReference type="NCBI Taxonomy" id="326940"/>
    <lineage>
        <taxon>Eukaryota</taxon>
        <taxon>Metazoa</taxon>
        <taxon>Chordata</taxon>
        <taxon>Craniata</taxon>
        <taxon>Vertebrata</taxon>
        <taxon>Euteleostomi</taxon>
        <taxon>Amphibia</taxon>
        <taxon>Batrachia</taxon>
        <taxon>Anura</taxon>
        <taxon>Neobatrachia</taxon>
        <taxon>Ranoidea</taxon>
        <taxon>Ranidae</taxon>
        <taxon>Odorrana</taxon>
    </lineage>
</organism>
<feature type="signal peptide" evidence="2">
    <location>
        <begin position="1"/>
        <end position="22"/>
    </location>
</feature>
<feature type="propeptide" id="PRO_0000268221">
    <location>
        <begin position="23"/>
        <end position="39"/>
    </location>
</feature>
<feature type="peptide" id="PRO_0000268222" description="Palustrin-1c">
    <location>
        <begin position="42"/>
        <end position="68"/>
    </location>
</feature>
<feature type="disulfide bond">
    <location>
        <begin position="62"/>
        <end position="68"/>
    </location>
</feature>
<accession>Q1JS94</accession>